<keyword id="KW-0010">Activator</keyword>
<keyword id="KW-0025">Alternative splicing</keyword>
<keyword id="KW-0539">Nucleus</keyword>
<keyword id="KW-1185">Reference proteome</keyword>
<keyword id="KW-0804">Transcription</keyword>
<keyword id="KW-0805">Transcription regulation</keyword>
<name>TAF6B_ARATH</name>
<organism>
    <name type="scientific">Arabidopsis thaliana</name>
    <name type="common">Mouse-ear cress</name>
    <dbReference type="NCBI Taxonomy" id="3702"/>
    <lineage>
        <taxon>Eukaryota</taxon>
        <taxon>Viridiplantae</taxon>
        <taxon>Streptophyta</taxon>
        <taxon>Embryophyta</taxon>
        <taxon>Tracheophyta</taxon>
        <taxon>Spermatophyta</taxon>
        <taxon>Magnoliopsida</taxon>
        <taxon>eudicotyledons</taxon>
        <taxon>Gunneridae</taxon>
        <taxon>Pentapetalae</taxon>
        <taxon>rosids</taxon>
        <taxon>malvids</taxon>
        <taxon>Brassicales</taxon>
        <taxon>Brassicaceae</taxon>
        <taxon>Camelineae</taxon>
        <taxon>Arabidopsis</taxon>
    </lineage>
</organism>
<protein>
    <recommendedName>
        <fullName>Transcription initiation factor TFIID subunit 6b</fullName>
    </recommendedName>
    <alternativeName>
        <fullName>TBP-associated factor 6b</fullName>
        <shortName>AtTAF6b</shortName>
    </alternativeName>
</protein>
<comment type="function">
    <text evidence="3">TAFs are components of the transcription factor IID (TFIID) complex that is essential for mediating regulation of RNA polymerase transcription. Not redundant with TAF6.</text>
</comment>
<comment type="subunit">
    <text evidence="4">Component of the TFIID complex. TFIID is composed of TATA binding protein (TBP) and a number of TBP-associated factors (TAFs) whose MWs range from 14-217 kDa. Interacts with TAF5 and TAF9.</text>
</comment>
<comment type="interaction">
    <interactant intactId="EBI-1245557">
        <id>F4HVA6</id>
    </interactant>
    <interactant intactId="EBI-1247479">
        <id>O04173</id>
        <label>TAF10</label>
    </interactant>
    <organismsDiffer>false</organismsDiffer>
    <experiments>3</experiments>
</comment>
<comment type="interaction">
    <interactant intactId="EBI-1245557">
        <id>F4HVA6</id>
    </interactant>
    <interactant intactId="EBI-1247501">
        <id>Q6S7B0</id>
        <label>TAF5</label>
    </interactant>
    <organismsDiffer>false</organismsDiffer>
    <experiments>3</experiments>
</comment>
<comment type="interaction">
    <interactant intactId="EBI-1245557">
        <id>F4HVA6</id>
    </interactant>
    <interactant intactId="EBI-1247576">
        <id>Q9SYH2</id>
        <label>TAF9</label>
    </interactant>
    <organismsDiffer>false</organismsDiffer>
    <experiments>4</experiments>
</comment>
<comment type="subcellular location">
    <subcellularLocation>
        <location evidence="8">Nucleus</location>
    </subcellularLocation>
</comment>
<comment type="alternative products">
    <event type="alternative splicing"/>
    <isoform>
        <id>F4HVA6-1</id>
        <name>1</name>
        <sequence type="displayed"/>
    </isoform>
    <isoform>
        <id>F4HVA6-2</id>
        <name>2</name>
        <sequence type="described" ref="VSP_053304"/>
    </isoform>
    <isoform>
        <id>F4HVA6-3</id>
        <name>3</name>
        <sequence type="described" ref="VSP_053304 VSP_053305"/>
    </isoform>
    <isoform>
        <id>F4HVA6-4</id>
        <name>4</name>
        <sequence type="described" ref="VSP_053303"/>
    </isoform>
    <isoform>
        <id>F4HVA6-5</id>
        <name>5</name>
        <sequence type="described" ref="VSP_053301"/>
    </isoform>
    <isoform>
        <id>F4HVA6-6</id>
        <name>6</name>
        <sequence type="described" ref="VSP_053302"/>
    </isoform>
</comment>
<comment type="tissue specificity">
    <text evidence="2 3">Expressed in roots, leaves, inflorescences and siliques.</text>
</comment>
<comment type="developmental stage">
    <text evidence="3">Not expressed in germinating pollen.</text>
</comment>
<comment type="similarity">
    <text evidence="8">Belongs to the TAF6 family.</text>
</comment>
<comment type="sequence caution" evidence="8">
    <conflict type="erroneous gene model prediction">
        <sequence resource="EMBL-CDS" id="AAD25616"/>
    </conflict>
</comment>
<comment type="sequence caution" evidence="8">
    <conflict type="erroneous initiation">
        <sequence resource="EMBL-CDS" id="AAL32535"/>
    </conflict>
    <text>Truncated N-terminus.</text>
</comment>
<feature type="chain" id="PRO_0000424043" description="Transcription initiation factor TFIID subunit 6b">
    <location>
        <begin position="1"/>
        <end position="527"/>
    </location>
</feature>
<feature type="domain" description="Histone-fold">
    <location>
        <begin position="3"/>
        <end position="99"/>
    </location>
</feature>
<feature type="region of interest" description="Disordered" evidence="1">
    <location>
        <begin position="410"/>
        <end position="442"/>
    </location>
</feature>
<feature type="region of interest" description="Disordered" evidence="1">
    <location>
        <begin position="462"/>
        <end position="492"/>
    </location>
</feature>
<feature type="compositionally biased region" description="Polar residues" evidence="1">
    <location>
        <begin position="416"/>
        <end position="427"/>
    </location>
</feature>
<feature type="compositionally biased region" description="Polar residues" evidence="1">
    <location>
        <begin position="462"/>
        <end position="473"/>
    </location>
</feature>
<feature type="splice variant" id="VSP_053301" description="In isoform 5." evidence="8">
    <location>
        <begin position="1"/>
        <end position="99"/>
    </location>
</feature>
<feature type="splice variant" id="VSP_053302" description="In isoform 6." evidence="7">
    <location>
        <begin position="30"/>
        <end position="80"/>
    </location>
</feature>
<feature type="splice variant" id="VSP_053303" description="In isoform 4." evidence="8">
    <location>
        <begin position="33"/>
        <end position="83"/>
    </location>
</feature>
<feature type="splice variant" id="VSP_053304" description="In isoform 2 and isoform 3." evidence="5 6 7">
    <location>
        <begin position="40"/>
        <end position="62"/>
    </location>
</feature>
<feature type="splice variant" id="VSP_053305" description="In isoform 3." evidence="7">
    <location>
        <begin position="178"/>
        <end position="184"/>
    </location>
</feature>
<feature type="sequence conflict" description="In Ref. 2; AAS17938/AAS17939/AAS17940 and 5; AAL32535/AAO29980." evidence="8" ref="2 5">
    <original>L</original>
    <variation>S</variation>
    <location>
        <position position="140"/>
    </location>
</feature>
<reference key="1">
    <citation type="journal article" date="2004" name="Gene">
        <title>TBP-associated factors in Arabidopsis.</title>
        <authorList>
            <person name="Lago C."/>
            <person name="Clerici E."/>
            <person name="Mizzi L."/>
            <person name="Colombo L."/>
            <person name="Kater M.M."/>
        </authorList>
    </citation>
    <scope>NUCLEOTIDE SEQUENCE [MRNA] (ISOFORM 2)</scope>
    <scope>IDENTIFICATION</scope>
    <scope>NOMENCLATURE</scope>
    <scope>TISSUE SPECIFICITY</scope>
</reference>
<reference key="2">
    <citation type="journal article" date="2007" name="Plant Mol. Biol.">
        <title>Yeast two-hybrid map of Arabidopsis TFIID.</title>
        <authorList>
            <person name="Lawit S.J."/>
            <person name="O'Grady K."/>
            <person name="Gurley W.B."/>
            <person name="Czarnecka-Verner E."/>
        </authorList>
    </citation>
    <scope>NUCLEOTIDE SEQUENCE [MRNA] (ISOFORMS 2; 3 AND 6)</scope>
    <scope>INTERACTION WITH TAF5 AND TAF9</scope>
    <source>
        <strain>cv. Columbia</strain>
    </source>
</reference>
<reference key="3">
    <citation type="journal article" date="2000" name="Nature">
        <title>Sequence and analysis of chromosome 1 of the plant Arabidopsis thaliana.</title>
        <authorList>
            <person name="Theologis A."/>
            <person name="Ecker J.R."/>
            <person name="Palm C.J."/>
            <person name="Federspiel N.A."/>
            <person name="Kaul S."/>
            <person name="White O."/>
            <person name="Alonso J."/>
            <person name="Altafi H."/>
            <person name="Araujo R."/>
            <person name="Bowman C.L."/>
            <person name="Brooks S.Y."/>
            <person name="Buehler E."/>
            <person name="Chan A."/>
            <person name="Chao Q."/>
            <person name="Chen H."/>
            <person name="Cheuk R.F."/>
            <person name="Chin C.W."/>
            <person name="Chung M.K."/>
            <person name="Conn L."/>
            <person name="Conway A.B."/>
            <person name="Conway A.R."/>
            <person name="Creasy T.H."/>
            <person name="Dewar K."/>
            <person name="Dunn P."/>
            <person name="Etgu P."/>
            <person name="Feldblyum T.V."/>
            <person name="Feng J.-D."/>
            <person name="Fong B."/>
            <person name="Fujii C.Y."/>
            <person name="Gill J.E."/>
            <person name="Goldsmith A.D."/>
            <person name="Haas B."/>
            <person name="Hansen N.F."/>
            <person name="Hughes B."/>
            <person name="Huizar L."/>
            <person name="Hunter J.L."/>
            <person name="Jenkins J."/>
            <person name="Johnson-Hopson C."/>
            <person name="Khan S."/>
            <person name="Khaykin E."/>
            <person name="Kim C.J."/>
            <person name="Koo H.L."/>
            <person name="Kremenetskaia I."/>
            <person name="Kurtz D.B."/>
            <person name="Kwan A."/>
            <person name="Lam B."/>
            <person name="Langin-Hooper S."/>
            <person name="Lee A."/>
            <person name="Lee J.M."/>
            <person name="Lenz C.A."/>
            <person name="Li J.H."/>
            <person name="Li Y.-P."/>
            <person name="Lin X."/>
            <person name="Liu S.X."/>
            <person name="Liu Z.A."/>
            <person name="Luros J.S."/>
            <person name="Maiti R."/>
            <person name="Marziali A."/>
            <person name="Militscher J."/>
            <person name="Miranda M."/>
            <person name="Nguyen M."/>
            <person name="Nierman W.C."/>
            <person name="Osborne B.I."/>
            <person name="Pai G."/>
            <person name="Peterson J."/>
            <person name="Pham P.K."/>
            <person name="Rizzo M."/>
            <person name="Rooney T."/>
            <person name="Rowley D."/>
            <person name="Sakano H."/>
            <person name="Salzberg S.L."/>
            <person name="Schwartz J.R."/>
            <person name="Shinn P."/>
            <person name="Southwick A.M."/>
            <person name="Sun H."/>
            <person name="Tallon L.J."/>
            <person name="Tambunga G."/>
            <person name="Toriumi M.J."/>
            <person name="Town C.D."/>
            <person name="Utterback T."/>
            <person name="Van Aken S."/>
            <person name="Vaysberg M."/>
            <person name="Vysotskaia V.S."/>
            <person name="Walker M."/>
            <person name="Wu D."/>
            <person name="Yu G."/>
            <person name="Fraser C.M."/>
            <person name="Venter J.C."/>
            <person name="Davis R.W."/>
        </authorList>
    </citation>
    <scope>NUCLEOTIDE SEQUENCE [LARGE SCALE GENOMIC DNA]</scope>
    <source>
        <strain>cv. Columbia</strain>
    </source>
</reference>
<reference key="4">
    <citation type="journal article" date="2017" name="Plant J.">
        <title>Araport11: a complete reannotation of the Arabidopsis thaliana reference genome.</title>
        <authorList>
            <person name="Cheng C.Y."/>
            <person name="Krishnakumar V."/>
            <person name="Chan A.P."/>
            <person name="Thibaud-Nissen F."/>
            <person name="Schobel S."/>
            <person name="Town C.D."/>
        </authorList>
    </citation>
    <scope>GENOME REANNOTATION</scope>
    <source>
        <strain>cv. Columbia</strain>
    </source>
</reference>
<reference key="5">
    <citation type="journal article" date="2003" name="Science">
        <title>Empirical analysis of transcriptional activity in the Arabidopsis genome.</title>
        <authorList>
            <person name="Yamada K."/>
            <person name="Lim J."/>
            <person name="Dale J.M."/>
            <person name="Chen H."/>
            <person name="Shinn P."/>
            <person name="Palm C.J."/>
            <person name="Southwick A.M."/>
            <person name="Wu H.C."/>
            <person name="Kim C.J."/>
            <person name="Nguyen M."/>
            <person name="Pham P.K."/>
            <person name="Cheuk R.F."/>
            <person name="Karlin-Newmann G."/>
            <person name="Liu S.X."/>
            <person name="Lam B."/>
            <person name="Sakano H."/>
            <person name="Wu T."/>
            <person name="Yu G."/>
            <person name="Miranda M."/>
            <person name="Quach H.L."/>
            <person name="Tripp M."/>
            <person name="Chang C.H."/>
            <person name="Lee J.M."/>
            <person name="Toriumi M.J."/>
            <person name="Chan M.M."/>
            <person name="Tang C.C."/>
            <person name="Onodera C.S."/>
            <person name="Deng J.M."/>
            <person name="Akiyama K."/>
            <person name="Ansari Y."/>
            <person name="Arakawa T."/>
            <person name="Banh J."/>
            <person name="Banno F."/>
            <person name="Bowser L."/>
            <person name="Brooks S.Y."/>
            <person name="Carninci P."/>
            <person name="Chao Q."/>
            <person name="Choy N."/>
            <person name="Enju A."/>
            <person name="Goldsmith A.D."/>
            <person name="Gurjal M."/>
            <person name="Hansen N.F."/>
            <person name="Hayashizaki Y."/>
            <person name="Johnson-Hopson C."/>
            <person name="Hsuan V.W."/>
            <person name="Iida K."/>
            <person name="Karnes M."/>
            <person name="Khan S."/>
            <person name="Koesema E."/>
            <person name="Ishida J."/>
            <person name="Jiang P.X."/>
            <person name="Jones T."/>
            <person name="Kawai J."/>
            <person name="Kamiya A."/>
            <person name="Meyers C."/>
            <person name="Nakajima M."/>
            <person name="Narusaka M."/>
            <person name="Seki M."/>
            <person name="Sakurai T."/>
            <person name="Satou M."/>
            <person name="Tamse R."/>
            <person name="Vaysberg M."/>
            <person name="Wallender E.K."/>
            <person name="Wong C."/>
            <person name="Yamamura Y."/>
            <person name="Yuan S."/>
            <person name="Shinozaki K."/>
            <person name="Davis R.W."/>
            <person name="Theologis A."/>
            <person name="Ecker J.R."/>
        </authorList>
    </citation>
    <scope>NUCLEOTIDE SEQUENCE [LARGE SCALE MRNA] OF 23-527 (ISOFORM 2)</scope>
    <source>
        <strain>cv. Columbia</strain>
    </source>
</reference>
<reference key="6">
    <citation type="journal article" date="2005" name="Dev. Biol.">
        <title>The Arabidopsis TFIID factor AtTAF6 controls pollen tube growth.</title>
        <authorList>
            <person name="Lago C."/>
            <person name="Clerici E."/>
            <person name="Dreni L."/>
            <person name="Horlow C."/>
            <person name="Caporali E."/>
            <person name="Colombo L."/>
            <person name="Kater M.M."/>
        </authorList>
    </citation>
    <scope>FUNCTION</scope>
    <scope>TISSUE SPECIFICITY</scope>
    <scope>DEVELOPMENTAL STAGE</scope>
    <source>
        <strain>cv. Wassilewskija</strain>
    </source>
</reference>
<gene>
    <name type="primary">TAF6B</name>
    <name type="ordered locus">At1g54360</name>
    <name type="ORF">F20D21.18</name>
</gene>
<evidence type="ECO:0000256" key="1">
    <source>
        <dbReference type="SAM" id="MobiDB-lite"/>
    </source>
</evidence>
<evidence type="ECO:0000269" key="2">
    <source>
    </source>
</evidence>
<evidence type="ECO:0000269" key="3">
    <source>
    </source>
</evidence>
<evidence type="ECO:0000269" key="4">
    <source>
    </source>
</evidence>
<evidence type="ECO:0000303" key="5">
    <source>
    </source>
</evidence>
<evidence type="ECO:0000303" key="6">
    <source>
    </source>
</evidence>
<evidence type="ECO:0000303" key="7">
    <source>
    </source>
</evidence>
<evidence type="ECO:0000305" key="8"/>
<accession>F4HVA6</accession>
<accession>F4HVA7</accession>
<accession>F4HVA8</accession>
<accession>F4HVA9</accession>
<accession>F4HVB0</accession>
<accession>Q6S7A0</accession>
<accession>Q6S7A1</accession>
<accession>Q6S7A2</accession>
<accession>Q8W4N6</accession>
<accession>Q9SLJ8</accession>
<dbReference type="EMBL" id="AY463630">
    <property type="protein sequence ID" value="AAS17938.1"/>
    <property type="molecule type" value="mRNA"/>
</dbReference>
<dbReference type="EMBL" id="AY463631">
    <property type="protein sequence ID" value="AAS17939.1"/>
    <property type="molecule type" value="mRNA"/>
</dbReference>
<dbReference type="EMBL" id="AY463632">
    <property type="protein sequence ID" value="AAS17940.1"/>
    <property type="molecule type" value="mRNA"/>
</dbReference>
<dbReference type="EMBL" id="AC005287">
    <property type="protein sequence ID" value="AAD25616.1"/>
    <property type="status" value="ALT_SEQ"/>
    <property type="molecule type" value="Genomic_DNA"/>
</dbReference>
<dbReference type="EMBL" id="CP002684">
    <property type="protein sequence ID" value="AEE33085.1"/>
    <property type="molecule type" value="Genomic_DNA"/>
</dbReference>
<dbReference type="EMBL" id="CP002684">
    <property type="protein sequence ID" value="AEE33086.1"/>
    <property type="molecule type" value="Genomic_DNA"/>
</dbReference>
<dbReference type="EMBL" id="CP002684">
    <property type="protein sequence ID" value="AEE33088.1"/>
    <property type="molecule type" value="Genomic_DNA"/>
</dbReference>
<dbReference type="EMBL" id="AY062457">
    <property type="protein sequence ID" value="AAL32535.1"/>
    <property type="status" value="ALT_INIT"/>
    <property type="molecule type" value="mRNA"/>
</dbReference>
<dbReference type="EMBL" id="BT003362">
    <property type="protein sequence ID" value="AAO29980.1"/>
    <property type="molecule type" value="mRNA"/>
</dbReference>
<dbReference type="PIR" id="C96585">
    <property type="entry name" value="C96585"/>
</dbReference>
<dbReference type="RefSeq" id="NP_001031187.2">
    <molecule id="F4HVA6-3"/>
    <property type="nucleotide sequence ID" value="NM_001036110.1"/>
</dbReference>
<dbReference type="RefSeq" id="NP_001185221.1">
    <molecule id="F4HVA6-4"/>
    <property type="nucleotide sequence ID" value="NM_001198292.1"/>
</dbReference>
<dbReference type="RefSeq" id="NP_974024.2">
    <molecule id="F4HVA6-1"/>
    <property type="nucleotide sequence ID" value="NM_202295.2"/>
</dbReference>
<dbReference type="SMR" id="F4HVA6"/>
<dbReference type="BioGRID" id="27102">
    <property type="interactions" value="43"/>
</dbReference>
<dbReference type="FunCoup" id="F4HVA6">
    <property type="interactions" value="3208"/>
</dbReference>
<dbReference type="IntAct" id="F4HVA6">
    <property type="interactions" value="16"/>
</dbReference>
<dbReference type="STRING" id="3702.F4HVA6"/>
<dbReference type="PaxDb" id="3702-AT1G54360.2"/>
<dbReference type="ProteomicsDB" id="234131">
    <molecule id="F4HVA6-1"/>
</dbReference>
<dbReference type="GeneID" id="841877"/>
<dbReference type="KEGG" id="ath:AT1G54360"/>
<dbReference type="Araport" id="AT1G54360"/>
<dbReference type="TAIR" id="AT1G54360">
    <property type="gene designation" value="TAF6B"/>
</dbReference>
<dbReference type="eggNOG" id="KOG2549">
    <property type="taxonomic scope" value="Eukaryota"/>
</dbReference>
<dbReference type="HOGENOM" id="CLU_541420_0_0_1"/>
<dbReference type="InParanoid" id="F4HVA6"/>
<dbReference type="PRO" id="PR:F4HVA6"/>
<dbReference type="Proteomes" id="UP000006548">
    <property type="component" value="Chromosome 1"/>
</dbReference>
<dbReference type="ExpressionAtlas" id="F4HVA6">
    <property type="expression patterns" value="baseline and differential"/>
</dbReference>
<dbReference type="GO" id="GO:0000124">
    <property type="term" value="C:SAGA complex"/>
    <property type="evidence" value="ECO:0007669"/>
    <property type="project" value="InterPro"/>
</dbReference>
<dbReference type="GO" id="GO:0046695">
    <property type="term" value="C:SLIK (SAGA-like) complex"/>
    <property type="evidence" value="ECO:0007669"/>
    <property type="project" value="InterPro"/>
</dbReference>
<dbReference type="GO" id="GO:0005669">
    <property type="term" value="C:transcription factor TFIID complex"/>
    <property type="evidence" value="ECO:0007669"/>
    <property type="project" value="InterPro"/>
</dbReference>
<dbReference type="GO" id="GO:0046982">
    <property type="term" value="F:protein heterodimerization activity"/>
    <property type="evidence" value="ECO:0007669"/>
    <property type="project" value="InterPro"/>
</dbReference>
<dbReference type="GO" id="GO:0016251">
    <property type="term" value="F:RNA polymerase II general transcription initiation factor activity"/>
    <property type="evidence" value="ECO:0007669"/>
    <property type="project" value="InterPro"/>
</dbReference>
<dbReference type="GO" id="GO:0006367">
    <property type="term" value="P:transcription initiation at RNA polymerase II promoter"/>
    <property type="evidence" value="ECO:0007669"/>
    <property type="project" value="InterPro"/>
</dbReference>
<dbReference type="CDD" id="cd22931">
    <property type="entry name" value="HFD_TAF6"/>
    <property type="match status" value="1"/>
</dbReference>
<dbReference type="CDD" id="cd08050">
    <property type="entry name" value="TAF6C"/>
    <property type="match status" value="1"/>
</dbReference>
<dbReference type="FunFam" id="1.10.20.10:FF:000046">
    <property type="entry name" value="transcription initiation factor TFIID subunit 6"/>
    <property type="match status" value="1"/>
</dbReference>
<dbReference type="FunFam" id="1.25.40.770:FF:000004">
    <property type="entry name" value="transcription initiation factor TFIID subunit 6"/>
    <property type="match status" value="1"/>
</dbReference>
<dbReference type="Gene3D" id="1.10.20.10">
    <property type="entry name" value="Histone, subunit A"/>
    <property type="match status" value="1"/>
</dbReference>
<dbReference type="Gene3D" id="1.25.40.770">
    <property type="entry name" value="TAF6, C-terminal HEAT repeat domain"/>
    <property type="match status" value="1"/>
</dbReference>
<dbReference type="InterPro" id="IPR016024">
    <property type="entry name" value="ARM-type_fold"/>
</dbReference>
<dbReference type="InterPro" id="IPR009072">
    <property type="entry name" value="Histone-fold"/>
</dbReference>
<dbReference type="InterPro" id="IPR037796">
    <property type="entry name" value="TAF6"/>
</dbReference>
<dbReference type="InterPro" id="IPR011442">
    <property type="entry name" value="TAF6_C"/>
</dbReference>
<dbReference type="InterPro" id="IPR046344">
    <property type="entry name" value="TAF6_C_sf"/>
</dbReference>
<dbReference type="InterPro" id="IPR004823">
    <property type="entry name" value="TAF_TATA-bd_Histone-like_dom"/>
</dbReference>
<dbReference type="PANTHER" id="PTHR10221">
    <property type="entry name" value="TRANSCRIPTION INITIATION FACTOR TFIID SUBUNIT 6"/>
    <property type="match status" value="1"/>
</dbReference>
<dbReference type="PANTHER" id="PTHR10221:SF9">
    <property type="entry name" value="TRANSCRIPTION INITIATION FACTOR TFIID SUBUNIT 6"/>
    <property type="match status" value="1"/>
</dbReference>
<dbReference type="Pfam" id="PF02969">
    <property type="entry name" value="TAF"/>
    <property type="match status" value="2"/>
</dbReference>
<dbReference type="Pfam" id="PF07571">
    <property type="entry name" value="TAF6_C"/>
    <property type="match status" value="1"/>
</dbReference>
<dbReference type="SMART" id="SM00803">
    <property type="entry name" value="TAF"/>
    <property type="match status" value="1"/>
</dbReference>
<dbReference type="SUPFAM" id="SSF48371">
    <property type="entry name" value="ARM repeat"/>
    <property type="match status" value="1"/>
</dbReference>
<dbReference type="SUPFAM" id="SSF47113">
    <property type="entry name" value="Histone-fold"/>
    <property type="match status" value="1"/>
</dbReference>
<sequence>MVTKESIEVIAQSIGLSTLSPDVSAALAPDVEYRVREVMQVYHQLQLYFCPLISSLTCRRNLQEAIKCMRHARRTTLMAHDVDSALHFRNLEPTSGSKSMRFKRAPENRDLYFFDDKDVELKNVIEAPLPNAPPDASVFLHWLAIDGIQPSIPQNSPLQAISDLKRSEYKDDGLAARQVLSKDLQIYFDKVTEWALTQSGSTLFRQALASLEIDPGLHPLVPFFTSFIAEEIVKNMDNYPILLALMRLARSLLHNPHVHIEPYLHQLMPSIITCLIAKRLGRRSSDNHWDLRNFTASTVASTCKRFGHVYHNLLPRVTRSLLHTFLDPTKALPQHYGAIQGMVALGLNMVRFLVLPNLGPYLLLLLPEMGLEKQKEEAKRHGAWLVYGALMVAAGRCLYERLKTSETLLSPPTSSVWKTNGKLTSPRQSKRKASSDNLTHQPPLKKIAVGGIIQMSSTQMQMRGTTTVPQQSHTDADARHHNSPSTIAPKTSAAAGTDVDNYLFPLFEYFGESMLMFTPTHELSFFL</sequence>
<proteinExistence type="evidence at protein level"/>